<sequence>MDYSYLNSYDSCVAAMEASAYGDFGACSQPGGFQYSPLRPAFPAAGPPCPALGSSNCALGALRDHQPAPYSAVPYKFFPEPSGLHEKRKQRRIRTTFTSAQLKELERVFAETHYPDIYTREELALKIDLTEARVQVWFQNRRAKFRKQERAASAKGAAGAAGAKKGEARCSSEDDDSKESTCSPTPDSTASLPPPPAPGLASPRLSPSPLPVALGSGPGPGPGPQPLKGALWAGVAGGGGGGPGAGAAELLKAWQPAESGPGPFSGVLSSFHRKPGPALKTNLF</sequence>
<evidence type="ECO:0000255" key="1">
    <source>
        <dbReference type="PROSITE-ProRule" id="PRU00108"/>
    </source>
</evidence>
<evidence type="ECO:0000256" key="2">
    <source>
        <dbReference type="SAM" id="MobiDB-lite"/>
    </source>
</evidence>
<evidence type="ECO:0000269" key="3">
    <source>
    </source>
</evidence>
<evidence type="ECO:0000269" key="4">
    <source>
    </source>
</evidence>
<evidence type="ECO:0000305" key="5"/>
<proteinExistence type="evidence at protein level"/>
<organism>
    <name type="scientific">Homo sapiens</name>
    <name type="common">Human</name>
    <dbReference type="NCBI Taxonomy" id="9606"/>
    <lineage>
        <taxon>Eukaryota</taxon>
        <taxon>Metazoa</taxon>
        <taxon>Chordata</taxon>
        <taxon>Craniata</taxon>
        <taxon>Vertebrata</taxon>
        <taxon>Euteleostomi</taxon>
        <taxon>Mammalia</taxon>
        <taxon>Eutheria</taxon>
        <taxon>Euarchontoglires</taxon>
        <taxon>Primates</taxon>
        <taxon>Haplorrhini</taxon>
        <taxon>Catarrhini</taxon>
        <taxon>Hominidae</taxon>
        <taxon>Homo</taxon>
    </lineage>
</organism>
<gene>
    <name type="primary">PHOX2A</name>
    <name type="synonym">ARIX</name>
    <name type="synonym">PMX2A</name>
</gene>
<comment type="function">
    <text>May be involved in regulating the specificity of expression of the catecholamine biosynthetic genes. Acts as a transcription activator/factor. Could maintain the noradrenergic phenotype.</text>
</comment>
<comment type="interaction">
    <interactant intactId="EBI-25844430">
        <id>O14813</id>
    </interactant>
    <interactant intactId="EBI-10968534">
        <id>P50570-2</id>
        <label>DNM2</label>
    </interactant>
    <organismsDiffer>false</organismsDiffer>
    <experiments>3</experiments>
</comment>
<comment type="interaction">
    <interactant intactId="EBI-25844430">
        <id>O14813</id>
    </interactant>
    <interactant intactId="EBI-517086">
        <id>O43464</id>
        <label>HTRA2</label>
    </interactant>
    <organismsDiffer>false</organismsDiffer>
    <experiments>3</experiments>
</comment>
<comment type="interaction">
    <interactant intactId="EBI-25844430">
        <id>O14813</id>
    </interactant>
    <interactant intactId="EBI-752074">
        <id>P41219</id>
        <label>PRPH</label>
    </interactant>
    <organismsDiffer>false</organismsDiffer>
    <experiments>3</experiments>
</comment>
<comment type="subcellular location">
    <subcellularLocation>
        <location evidence="1">Nucleus</location>
    </subcellularLocation>
</comment>
<comment type="disease" evidence="3">
    <disease id="DI-00353">
        <name>Fibrosis of extraocular muscles, congenital, 2</name>
        <acronym>CFEOM2</acronym>
        <description>A congenital ocular motility disorder marked by restrictive ophthalmoplegia affecting extraocular muscles innervated by the oculomotor and/or trochlear nerves. It is clinically characterized by anchoring of the eyes in downward gaze, ptosis, and backward tilt of the head. Congenital fibrosis of extraocular muscles type 2 may result from the defective development of the oculomotor (nIII), trochlear (nIV) and abducens (nVI) cranial nerve nuclei.</description>
        <dbReference type="MIM" id="602078"/>
    </disease>
    <text>The disease is caused by variants affecting the gene represented in this entry.</text>
</comment>
<comment type="similarity">
    <text evidence="5">Belongs to the paired homeobox family.</text>
</comment>
<dbReference type="EMBL" id="AF022724">
    <property type="protein sequence ID" value="AAB82744.1"/>
    <property type="molecule type" value="Genomic_DNA"/>
</dbReference>
<dbReference type="EMBL" id="AF022722">
    <property type="protein sequence ID" value="AAB82744.1"/>
    <property type="status" value="JOINED"/>
    <property type="molecule type" value="Genomic_DNA"/>
</dbReference>
<dbReference type="EMBL" id="AF022723">
    <property type="protein sequence ID" value="AAB82744.1"/>
    <property type="status" value="JOINED"/>
    <property type="molecule type" value="Genomic_DNA"/>
</dbReference>
<dbReference type="EMBL" id="AK290645">
    <property type="protein sequence ID" value="BAF83334.1"/>
    <property type="molecule type" value="mRNA"/>
</dbReference>
<dbReference type="EMBL" id="CH471076">
    <property type="protein sequence ID" value="EAW74856.1"/>
    <property type="molecule type" value="Genomic_DNA"/>
</dbReference>
<dbReference type="EMBL" id="BC041564">
    <property type="protein sequence ID" value="AAH41564.1"/>
    <property type="molecule type" value="mRNA"/>
</dbReference>
<dbReference type="CCDS" id="CCDS8214.1"/>
<dbReference type="RefSeq" id="NP_005160.2">
    <property type="nucleotide sequence ID" value="NM_005169.3"/>
</dbReference>
<dbReference type="SMR" id="O14813"/>
<dbReference type="BioGRID" id="106894">
    <property type="interactions" value="6"/>
</dbReference>
<dbReference type="FunCoup" id="O14813">
    <property type="interactions" value="343"/>
</dbReference>
<dbReference type="IntAct" id="O14813">
    <property type="interactions" value="3"/>
</dbReference>
<dbReference type="STRING" id="9606.ENSP00000298231"/>
<dbReference type="iPTMnet" id="O14813"/>
<dbReference type="PhosphoSitePlus" id="O14813"/>
<dbReference type="BioMuta" id="PHOX2A"/>
<dbReference type="jPOST" id="O14813"/>
<dbReference type="MassIVE" id="O14813"/>
<dbReference type="PaxDb" id="9606-ENSP00000298231"/>
<dbReference type="PeptideAtlas" id="O14813"/>
<dbReference type="ProteomicsDB" id="48252"/>
<dbReference type="Antibodypedia" id="16943">
    <property type="antibodies" value="205 antibodies from 34 providers"/>
</dbReference>
<dbReference type="DNASU" id="401"/>
<dbReference type="Ensembl" id="ENST00000298231.5">
    <property type="protein sequence ID" value="ENSP00000298231.5"/>
    <property type="gene ID" value="ENSG00000165462.5"/>
</dbReference>
<dbReference type="GeneID" id="401"/>
<dbReference type="KEGG" id="hsa:401"/>
<dbReference type="MANE-Select" id="ENST00000298231.5">
    <property type="protein sequence ID" value="ENSP00000298231.5"/>
    <property type="RefSeq nucleotide sequence ID" value="NM_005169.4"/>
    <property type="RefSeq protein sequence ID" value="NP_005160.2"/>
</dbReference>
<dbReference type="UCSC" id="uc001osh.4">
    <property type="organism name" value="human"/>
</dbReference>
<dbReference type="AGR" id="HGNC:691"/>
<dbReference type="CTD" id="401"/>
<dbReference type="DisGeNET" id="401"/>
<dbReference type="GeneCards" id="PHOX2A"/>
<dbReference type="GeneReviews" id="PHOX2A"/>
<dbReference type="HGNC" id="HGNC:691">
    <property type="gene designation" value="PHOX2A"/>
</dbReference>
<dbReference type="HPA" id="ENSG00000165462">
    <property type="expression patterns" value="Tissue enriched (adrenal)"/>
</dbReference>
<dbReference type="MalaCards" id="PHOX2A"/>
<dbReference type="MIM" id="602078">
    <property type="type" value="phenotype"/>
</dbReference>
<dbReference type="MIM" id="602753">
    <property type="type" value="gene"/>
</dbReference>
<dbReference type="neXtProt" id="NX_O14813"/>
<dbReference type="OpenTargets" id="ENSG00000165462"/>
<dbReference type="Orphanet" id="45358">
    <property type="disease" value="Congenital fibrosis of extraocular muscles"/>
</dbReference>
<dbReference type="PharmGKB" id="PA28093"/>
<dbReference type="VEuPathDB" id="HostDB:ENSG00000165462"/>
<dbReference type="eggNOG" id="KOG0484">
    <property type="taxonomic scope" value="Eukaryota"/>
</dbReference>
<dbReference type="GeneTree" id="ENSGT00940000161147"/>
<dbReference type="HOGENOM" id="CLU_081152_0_0_1"/>
<dbReference type="InParanoid" id="O14813"/>
<dbReference type="OMA" id="YGDFSPC"/>
<dbReference type="OrthoDB" id="6159439at2759"/>
<dbReference type="PAN-GO" id="O14813">
    <property type="GO annotations" value="4 GO annotations based on evolutionary models"/>
</dbReference>
<dbReference type="PhylomeDB" id="O14813"/>
<dbReference type="TreeFam" id="TF351612"/>
<dbReference type="PathwayCommons" id="O14813"/>
<dbReference type="SignaLink" id="O14813"/>
<dbReference type="SIGNOR" id="O14813"/>
<dbReference type="BioGRID-ORCS" id="401">
    <property type="hits" value="29 hits in 1169 CRISPR screens"/>
</dbReference>
<dbReference type="ChiTaRS" id="PHOX2A">
    <property type="organism name" value="human"/>
</dbReference>
<dbReference type="GeneWiki" id="PHOX2A"/>
<dbReference type="GenomeRNAi" id="401"/>
<dbReference type="Pharos" id="O14813">
    <property type="development level" value="Tbio"/>
</dbReference>
<dbReference type="PRO" id="PR:O14813"/>
<dbReference type="Proteomes" id="UP000005640">
    <property type="component" value="Chromosome 11"/>
</dbReference>
<dbReference type="RNAct" id="O14813">
    <property type="molecule type" value="protein"/>
</dbReference>
<dbReference type="Bgee" id="ENSG00000165462">
    <property type="expression patterns" value="Expressed in male germ line stem cell (sensu Vertebrata) in testis and 59 other cell types or tissues"/>
</dbReference>
<dbReference type="ExpressionAtlas" id="O14813">
    <property type="expression patterns" value="baseline and differential"/>
</dbReference>
<dbReference type="GO" id="GO:0000785">
    <property type="term" value="C:chromatin"/>
    <property type="evidence" value="ECO:0000314"/>
    <property type="project" value="BHF-UCL"/>
</dbReference>
<dbReference type="GO" id="GO:0005634">
    <property type="term" value="C:nucleus"/>
    <property type="evidence" value="ECO:0007669"/>
    <property type="project" value="UniProtKB-SubCell"/>
</dbReference>
<dbReference type="GO" id="GO:0001228">
    <property type="term" value="F:DNA-binding transcription activator activity, RNA polymerase II-specific"/>
    <property type="evidence" value="ECO:0000314"/>
    <property type="project" value="MGI"/>
</dbReference>
<dbReference type="GO" id="GO:0003700">
    <property type="term" value="F:DNA-binding transcription factor activity"/>
    <property type="evidence" value="ECO:0000303"/>
    <property type="project" value="ProtInc"/>
</dbReference>
<dbReference type="GO" id="GO:0000981">
    <property type="term" value="F:DNA-binding transcription factor activity, RNA polymerase II-specific"/>
    <property type="evidence" value="ECO:0000247"/>
    <property type="project" value="NTNU_SB"/>
</dbReference>
<dbReference type="GO" id="GO:0000977">
    <property type="term" value="F:RNA polymerase II transcription regulatory region sequence-specific DNA binding"/>
    <property type="evidence" value="ECO:0000314"/>
    <property type="project" value="BHF-UCL"/>
</dbReference>
<dbReference type="GO" id="GO:1990837">
    <property type="term" value="F:sequence-specific double-stranded DNA binding"/>
    <property type="evidence" value="ECO:0000314"/>
    <property type="project" value="ARUK-UCL"/>
</dbReference>
<dbReference type="GO" id="GO:0071542">
    <property type="term" value="P:dopaminergic neuron differentiation"/>
    <property type="evidence" value="ECO:0000305"/>
    <property type="project" value="BHF-UCL"/>
</dbReference>
<dbReference type="GO" id="GO:0021703">
    <property type="term" value="P:locus ceruleus development"/>
    <property type="evidence" value="ECO:0007669"/>
    <property type="project" value="Ensembl"/>
</dbReference>
<dbReference type="GO" id="GO:0030901">
    <property type="term" value="P:midbrain development"/>
    <property type="evidence" value="ECO:0007669"/>
    <property type="project" value="Ensembl"/>
</dbReference>
<dbReference type="GO" id="GO:0003357">
    <property type="term" value="P:noradrenergic neuron differentiation"/>
    <property type="evidence" value="ECO:0000303"/>
    <property type="project" value="BHF-UCL"/>
</dbReference>
<dbReference type="GO" id="GO:0021623">
    <property type="term" value="P:oculomotor nerve formation"/>
    <property type="evidence" value="ECO:0007669"/>
    <property type="project" value="Ensembl"/>
</dbReference>
<dbReference type="GO" id="GO:0045944">
    <property type="term" value="P:positive regulation of transcription by RNA polymerase II"/>
    <property type="evidence" value="ECO:0000314"/>
    <property type="project" value="BHF-UCL"/>
</dbReference>
<dbReference type="GO" id="GO:0043576">
    <property type="term" value="P:regulation of respiratory gaseous exchange"/>
    <property type="evidence" value="ECO:0007669"/>
    <property type="project" value="Ensembl"/>
</dbReference>
<dbReference type="GO" id="GO:0006357">
    <property type="term" value="P:regulation of transcription by RNA polymerase II"/>
    <property type="evidence" value="ECO:0000314"/>
    <property type="project" value="MGI"/>
</dbReference>
<dbReference type="GO" id="GO:0021523">
    <property type="term" value="P:somatic motor neuron differentiation"/>
    <property type="evidence" value="ECO:0007669"/>
    <property type="project" value="Ensembl"/>
</dbReference>
<dbReference type="GO" id="GO:0048485">
    <property type="term" value="P:sympathetic nervous system development"/>
    <property type="evidence" value="ECO:0007669"/>
    <property type="project" value="Ensembl"/>
</dbReference>
<dbReference type="GO" id="GO:0021642">
    <property type="term" value="P:trochlear nerve formation"/>
    <property type="evidence" value="ECO:0007669"/>
    <property type="project" value="Ensembl"/>
</dbReference>
<dbReference type="CDD" id="cd00086">
    <property type="entry name" value="homeodomain"/>
    <property type="match status" value="1"/>
</dbReference>
<dbReference type="FunFam" id="1.10.10.60:FF:000207">
    <property type="entry name" value="paired mesoderm homeobox protein 2A"/>
    <property type="match status" value="1"/>
</dbReference>
<dbReference type="Gene3D" id="1.10.10.60">
    <property type="entry name" value="Homeodomain-like"/>
    <property type="match status" value="1"/>
</dbReference>
<dbReference type="InterPro" id="IPR001356">
    <property type="entry name" value="HD"/>
</dbReference>
<dbReference type="InterPro" id="IPR017970">
    <property type="entry name" value="Homeobox_CS"/>
</dbReference>
<dbReference type="InterPro" id="IPR009057">
    <property type="entry name" value="Homeodomain-like_sf"/>
</dbReference>
<dbReference type="InterPro" id="IPR050649">
    <property type="entry name" value="Paired_Homeobox_TFs"/>
</dbReference>
<dbReference type="PANTHER" id="PTHR24329">
    <property type="entry name" value="HOMEOBOX PROTEIN ARISTALESS"/>
    <property type="match status" value="1"/>
</dbReference>
<dbReference type="PANTHER" id="PTHR24329:SF303">
    <property type="entry name" value="PAIRED MESODERM HOMEOBOX PROTEIN 2A"/>
    <property type="match status" value="1"/>
</dbReference>
<dbReference type="Pfam" id="PF00046">
    <property type="entry name" value="Homeodomain"/>
    <property type="match status" value="1"/>
</dbReference>
<dbReference type="SMART" id="SM00389">
    <property type="entry name" value="HOX"/>
    <property type="match status" value="1"/>
</dbReference>
<dbReference type="SUPFAM" id="SSF46689">
    <property type="entry name" value="Homeodomain-like"/>
    <property type="match status" value="1"/>
</dbReference>
<dbReference type="PROSITE" id="PS00027">
    <property type="entry name" value="HOMEOBOX_1"/>
    <property type="match status" value="1"/>
</dbReference>
<dbReference type="PROSITE" id="PS50071">
    <property type="entry name" value="HOMEOBOX_2"/>
    <property type="match status" value="1"/>
</dbReference>
<feature type="chain" id="PRO_0000049259" description="Paired mesoderm homeobox protein 2A">
    <location>
        <begin position="1"/>
        <end position="284"/>
    </location>
</feature>
<feature type="DNA-binding region" description="Homeobox" evidence="1">
    <location>
        <begin position="90"/>
        <end position="149"/>
    </location>
</feature>
<feature type="region of interest" description="Disordered" evidence="2">
    <location>
        <begin position="145"/>
        <end position="284"/>
    </location>
</feature>
<feature type="compositionally biased region" description="Low complexity" evidence="2">
    <location>
        <begin position="153"/>
        <end position="163"/>
    </location>
</feature>
<feature type="compositionally biased region" description="Low complexity" evidence="2">
    <location>
        <begin position="199"/>
        <end position="215"/>
    </location>
</feature>
<feature type="compositionally biased region" description="Gly residues" evidence="2">
    <location>
        <begin position="235"/>
        <end position="245"/>
    </location>
</feature>
<feature type="sequence variant" id="VAR_019014" description="In CFEOM2; dbSNP:rs104894269." evidence="3">
    <original>A</original>
    <variation>V</variation>
    <location>
        <position position="72"/>
    </location>
</feature>
<feature type="sequence variant" id="VAR_019016" description="May be involved in congenital central hypoventilation syndrome; dbSNP:rs1041507260." evidence="4">
    <original>P</original>
    <variation>Q</variation>
    <location>
        <position position="256"/>
    </location>
</feature>
<feature type="sequence conflict" description="In Ref. 1; AAB82744." evidence="5" ref="1">
    <original>K</original>
    <variation>N</variation>
    <location>
        <position position="76"/>
    </location>
</feature>
<name>PHX2A_HUMAN</name>
<keyword id="KW-0010">Activator</keyword>
<keyword id="KW-0225">Disease variant</keyword>
<keyword id="KW-0238">DNA-binding</keyword>
<keyword id="KW-0371">Homeobox</keyword>
<keyword id="KW-0539">Nucleus</keyword>
<keyword id="KW-1267">Proteomics identification</keyword>
<keyword id="KW-1185">Reference proteome</keyword>
<keyword id="KW-0804">Transcription</keyword>
<keyword id="KW-0805">Transcription regulation</keyword>
<protein>
    <recommendedName>
        <fullName>Paired mesoderm homeobox protein 2A</fullName>
    </recommendedName>
    <alternativeName>
        <fullName>ARIX1 homeodomain protein</fullName>
    </alternativeName>
    <alternativeName>
        <fullName>Aristaless homeobox protein homolog</fullName>
    </alternativeName>
    <alternativeName>
        <fullName>Paired-like homeobox 2A</fullName>
    </alternativeName>
</protein>
<reference key="1">
    <citation type="journal article" date="1996" name="Genomics">
        <title>Mapping of the ARIX homeodomain gene to mouse chromosome 7 and human chromosome 11q13.</title>
        <authorList>
            <person name="Johnson K.R."/>
            <person name="Smith L."/>
            <person name="Johnson D.K."/>
            <person name="Rhodes J."/>
            <person name="Rinchik E.M."/>
            <person name="Thayer M."/>
            <person name="Lewis E.J."/>
        </authorList>
    </citation>
    <scope>NUCLEOTIDE SEQUENCE [GENOMIC DNA]</scope>
</reference>
<reference key="2">
    <citation type="journal article" date="2004" name="Nat. Genet.">
        <title>Complete sequencing and characterization of 21,243 full-length human cDNAs.</title>
        <authorList>
            <person name="Ota T."/>
            <person name="Suzuki Y."/>
            <person name="Nishikawa T."/>
            <person name="Otsuki T."/>
            <person name="Sugiyama T."/>
            <person name="Irie R."/>
            <person name="Wakamatsu A."/>
            <person name="Hayashi K."/>
            <person name="Sato H."/>
            <person name="Nagai K."/>
            <person name="Kimura K."/>
            <person name="Makita H."/>
            <person name="Sekine M."/>
            <person name="Obayashi M."/>
            <person name="Nishi T."/>
            <person name="Shibahara T."/>
            <person name="Tanaka T."/>
            <person name="Ishii S."/>
            <person name="Yamamoto J."/>
            <person name="Saito K."/>
            <person name="Kawai Y."/>
            <person name="Isono Y."/>
            <person name="Nakamura Y."/>
            <person name="Nagahari K."/>
            <person name="Murakami K."/>
            <person name="Yasuda T."/>
            <person name="Iwayanagi T."/>
            <person name="Wagatsuma M."/>
            <person name="Shiratori A."/>
            <person name="Sudo H."/>
            <person name="Hosoiri T."/>
            <person name="Kaku Y."/>
            <person name="Kodaira H."/>
            <person name="Kondo H."/>
            <person name="Sugawara M."/>
            <person name="Takahashi M."/>
            <person name="Kanda K."/>
            <person name="Yokoi T."/>
            <person name="Furuya T."/>
            <person name="Kikkawa E."/>
            <person name="Omura Y."/>
            <person name="Abe K."/>
            <person name="Kamihara K."/>
            <person name="Katsuta N."/>
            <person name="Sato K."/>
            <person name="Tanikawa M."/>
            <person name="Yamazaki M."/>
            <person name="Ninomiya K."/>
            <person name="Ishibashi T."/>
            <person name="Yamashita H."/>
            <person name="Murakawa K."/>
            <person name="Fujimori K."/>
            <person name="Tanai H."/>
            <person name="Kimata M."/>
            <person name="Watanabe M."/>
            <person name="Hiraoka S."/>
            <person name="Chiba Y."/>
            <person name="Ishida S."/>
            <person name="Ono Y."/>
            <person name="Takiguchi S."/>
            <person name="Watanabe S."/>
            <person name="Yosida M."/>
            <person name="Hotuta T."/>
            <person name="Kusano J."/>
            <person name="Kanehori K."/>
            <person name="Takahashi-Fujii A."/>
            <person name="Hara H."/>
            <person name="Tanase T.-O."/>
            <person name="Nomura Y."/>
            <person name="Togiya S."/>
            <person name="Komai F."/>
            <person name="Hara R."/>
            <person name="Takeuchi K."/>
            <person name="Arita M."/>
            <person name="Imose N."/>
            <person name="Musashino K."/>
            <person name="Yuuki H."/>
            <person name="Oshima A."/>
            <person name="Sasaki N."/>
            <person name="Aotsuka S."/>
            <person name="Yoshikawa Y."/>
            <person name="Matsunawa H."/>
            <person name="Ichihara T."/>
            <person name="Shiohata N."/>
            <person name="Sano S."/>
            <person name="Moriya S."/>
            <person name="Momiyama H."/>
            <person name="Satoh N."/>
            <person name="Takami S."/>
            <person name="Terashima Y."/>
            <person name="Suzuki O."/>
            <person name="Nakagawa S."/>
            <person name="Senoh A."/>
            <person name="Mizoguchi H."/>
            <person name="Goto Y."/>
            <person name="Shimizu F."/>
            <person name="Wakebe H."/>
            <person name="Hishigaki H."/>
            <person name="Watanabe T."/>
            <person name="Sugiyama A."/>
            <person name="Takemoto M."/>
            <person name="Kawakami B."/>
            <person name="Yamazaki M."/>
            <person name="Watanabe K."/>
            <person name="Kumagai A."/>
            <person name="Itakura S."/>
            <person name="Fukuzumi Y."/>
            <person name="Fujimori Y."/>
            <person name="Komiyama M."/>
            <person name="Tashiro H."/>
            <person name="Tanigami A."/>
            <person name="Fujiwara T."/>
            <person name="Ono T."/>
            <person name="Yamada K."/>
            <person name="Fujii Y."/>
            <person name="Ozaki K."/>
            <person name="Hirao M."/>
            <person name="Ohmori Y."/>
            <person name="Kawabata A."/>
            <person name="Hikiji T."/>
            <person name="Kobatake N."/>
            <person name="Inagaki H."/>
            <person name="Ikema Y."/>
            <person name="Okamoto S."/>
            <person name="Okitani R."/>
            <person name="Kawakami T."/>
            <person name="Noguchi S."/>
            <person name="Itoh T."/>
            <person name="Shigeta K."/>
            <person name="Senba T."/>
            <person name="Matsumura K."/>
            <person name="Nakajima Y."/>
            <person name="Mizuno T."/>
            <person name="Morinaga M."/>
            <person name="Sasaki M."/>
            <person name="Togashi T."/>
            <person name="Oyama M."/>
            <person name="Hata H."/>
            <person name="Watanabe M."/>
            <person name="Komatsu T."/>
            <person name="Mizushima-Sugano J."/>
            <person name="Satoh T."/>
            <person name="Shirai Y."/>
            <person name="Takahashi Y."/>
            <person name="Nakagawa K."/>
            <person name="Okumura K."/>
            <person name="Nagase T."/>
            <person name="Nomura N."/>
            <person name="Kikuchi H."/>
            <person name="Masuho Y."/>
            <person name="Yamashita R."/>
            <person name="Nakai K."/>
            <person name="Yada T."/>
            <person name="Nakamura Y."/>
            <person name="Ohara O."/>
            <person name="Isogai T."/>
            <person name="Sugano S."/>
        </authorList>
    </citation>
    <scope>NUCLEOTIDE SEQUENCE [LARGE SCALE MRNA]</scope>
    <source>
        <tissue>Embryo</tissue>
    </source>
</reference>
<reference key="3">
    <citation type="submission" date="2005-07" db="EMBL/GenBank/DDBJ databases">
        <authorList>
            <person name="Mural R.J."/>
            <person name="Istrail S."/>
            <person name="Sutton G.G."/>
            <person name="Florea L."/>
            <person name="Halpern A.L."/>
            <person name="Mobarry C.M."/>
            <person name="Lippert R."/>
            <person name="Walenz B."/>
            <person name="Shatkay H."/>
            <person name="Dew I."/>
            <person name="Miller J.R."/>
            <person name="Flanigan M.J."/>
            <person name="Edwards N.J."/>
            <person name="Bolanos R."/>
            <person name="Fasulo D."/>
            <person name="Halldorsson B.V."/>
            <person name="Hannenhalli S."/>
            <person name="Turner R."/>
            <person name="Yooseph S."/>
            <person name="Lu F."/>
            <person name="Nusskern D.R."/>
            <person name="Shue B.C."/>
            <person name="Zheng X.H."/>
            <person name="Zhong F."/>
            <person name="Delcher A.L."/>
            <person name="Huson D.H."/>
            <person name="Kravitz S.A."/>
            <person name="Mouchard L."/>
            <person name="Reinert K."/>
            <person name="Remington K.A."/>
            <person name="Clark A.G."/>
            <person name="Waterman M.S."/>
            <person name="Eichler E.E."/>
            <person name="Adams M.D."/>
            <person name="Hunkapiller M.W."/>
            <person name="Myers E.W."/>
            <person name="Venter J.C."/>
        </authorList>
    </citation>
    <scope>NUCLEOTIDE SEQUENCE [LARGE SCALE GENOMIC DNA]</scope>
</reference>
<reference key="4">
    <citation type="journal article" date="2004" name="Genome Res.">
        <title>The status, quality, and expansion of the NIH full-length cDNA project: the Mammalian Gene Collection (MGC).</title>
        <authorList>
            <consortium name="The MGC Project Team"/>
        </authorList>
    </citation>
    <scope>NUCLEOTIDE SEQUENCE [LARGE SCALE MRNA]</scope>
    <source>
        <tissue>Brain</tissue>
    </source>
</reference>
<reference key="5">
    <citation type="journal article" date="2001" name="Nat. Genet.">
        <title>Homozygous mutations in ARIX(PHOX2A) result in congenital fibrosis of the extraocular muscles type 2.</title>
        <authorList>
            <person name="Nakano M."/>
            <person name="Yamada K."/>
            <person name="Fain J."/>
            <person name="Sener E.C."/>
            <person name="Selleck C.J."/>
            <person name="Awad A.H."/>
            <person name="Zwaan J."/>
            <person name="Mullaney P.B."/>
            <person name="Bosley T.M."/>
            <person name="Engle E.C."/>
        </authorList>
    </citation>
    <scope>VARIANT CFEOM2 VAL-72</scope>
</reference>
<reference key="6">
    <citation type="journal article" date="2003" name="Hum. Genet.">
        <title>Molecular analysis of congenital central hypoventilation syndrome.</title>
        <authorList>
            <person name="Sasaki A."/>
            <person name="Kanai M."/>
            <person name="Kijima K."/>
            <person name="Akaba K."/>
            <person name="Hashimoto M."/>
            <person name="Hasegawa H."/>
            <person name="Otaki S."/>
            <person name="Koizumi T."/>
            <person name="Kusuda S."/>
            <person name="Ogawa Y."/>
            <person name="Tuchiya K."/>
            <person name="Yamamoto W."/>
            <person name="Nakamura T."/>
            <person name="Hayasaka K."/>
        </authorList>
    </citation>
    <scope>VARIANT GLN-256</scope>
</reference>
<accession>O14813</accession>
<accession>A8K3N0</accession>
<accession>Q8IVZ2</accession>